<feature type="chain" id="PRO_1000205651" description="Chromosomal replication initiator protein DnaA">
    <location>
        <begin position="1"/>
        <end position="463"/>
    </location>
</feature>
<feature type="region of interest" description="Domain I, interacts with DnaA modulators" evidence="1">
    <location>
        <begin position="1"/>
        <end position="83"/>
    </location>
</feature>
<feature type="region of interest" description="Domain II" evidence="1">
    <location>
        <begin position="83"/>
        <end position="126"/>
    </location>
</feature>
<feature type="region of interest" description="Domain III, AAA+ region" evidence="1">
    <location>
        <begin position="127"/>
        <end position="343"/>
    </location>
</feature>
<feature type="region of interest" description="Domain IV, binds dsDNA" evidence="1">
    <location>
        <begin position="344"/>
        <end position="463"/>
    </location>
</feature>
<feature type="binding site" evidence="1">
    <location>
        <position position="171"/>
    </location>
    <ligand>
        <name>ATP</name>
        <dbReference type="ChEBI" id="CHEBI:30616"/>
    </ligand>
</feature>
<feature type="binding site" evidence="1">
    <location>
        <position position="173"/>
    </location>
    <ligand>
        <name>ATP</name>
        <dbReference type="ChEBI" id="CHEBI:30616"/>
    </ligand>
</feature>
<feature type="binding site" evidence="1">
    <location>
        <position position="174"/>
    </location>
    <ligand>
        <name>ATP</name>
        <dbReference type="ChEBI" id="CHEBI:30616"/>
    </ligand>
</feature>
<feature type="binding site" evidence="1">
    <location>
        <position position="175"/>
    </location>
    <ligand>
        <name>ATP</name>
        <dbReference type="ChEBI" id="CHEBI:30616"/>
    </ligand>
</feature>
<sequence>MSLSLWQQCLARLQDELPATEFSMWIRPLQAELSDNTLALYAPNRFVLDWVRDKYINNINGLLNDFCGSDAPVLRFEVGSKPIVPVAVSSAASSGASVPPAAVRASSLARPSWERVTAQPELSYRSNVNPKHTFDNFVEGKSNQLARAAARQVADNPGGAYNPLFLYGGTGLGKTHLLHAVGNGIMARKPNAKVVYMHSERFVQDMVKALQNNAIEEFKRYYRSVDALLIDDIQFFANKERSQEEFFHTFNALLEGNQQIILTSDRYPKEINGVEDRLKSRFGWGLTVAIEPPELETRVAILMKKADENDIRLPGEVAFFIAKRLRSNVRELEGALNRVIANANFTGRAITIDFVREALRDLLALQEKLVTIDNIQKTVAEYYKIKVADLLSKRRSRSVARPRQMAMALAKELTNHSLPEIGDAFGGRDHTTVLHACRKIEQLREESHDIKEDFSNLIRTLSS</sequence>
<accession>C5BHC5</accession>
<organism>
    <name type="scientific">Edwardsiella ictaluri (strain 93-146)</name>
    <dbReference type="NCBI Taxonomy" id="634503"/>
    <lineage>
        <taxon>Bacteria</taxon>
        <taxon>Pseudomonadati</taxon>
        <taxon>Pseudomonadota</taxon>
        <taxon>Gammaproteobacteria</taxon>
        <taxon>Enterobacterales</taxon>
        <taxon>Hafniaceae</taxon>
        <taxon>Edwardsiella</taxon>
    </lineage>
</organism>
<reference key="1">
    <citation type="submission" date="2009-03" db="EMBL/GenBank/DDBJ databases">
        <title>Complete genome sequence of Edwardsiella ictaluri 93-146.</title>
        <authorList>
            <person name="Williams M.L."/>
            <person name="Gillaspy A.F."/>
            <person name="Dyer D.W."/>
            <person name="Thune R.L."/>
            <person name="Waldbieser G.C."/>
            <person name="Schuster S.C."/>
            <person name="Gipson J."/>
            <person name="Zaitshik J."/>
            <person name="Landry C."/>
            <person name="Lawrence M.L."/>
        </authorList>
    </citation>
    <scope>NUCLEOTIDE SEQUENCE [LARGE SCALE GENOMIC DNA]</scope>
    <source>
        <strain>93-146</strain>
    </source>
</reference>
<comment type="function">
    <text evidence="1">Plays an essential role in the initiation and regulation of chromosomal replication. ATP-DnaA binds to the origin of replication (oriC) to initiate formation of the DNA replication initiation complex once per cell cycle. Binds the DnaA box (a 9 base pair repeat at the origin) and separates the double-stranded (ds)DNA. Forms a right-handed helical filament on oriC DNA; dsDNA binds to the exterior of the filament while single-stranded (ss)DNA is stabiized in the filament's interior. The ATP-DnaA-oriC complex binds and stabilizes one strand of the AT-rich DNA unwinding element (DUE), permitting loading of DNA polymerase. After initiation quickly degrades to an ADP-DnaA complex that is not apt for DNA replication. Binds acidic phospholipids.</text>
</comment>
<comment type="subunit">
    <text evidence="1">Oligomerizes as a right-handed, spiral filament on DNA at oriC.</text>
</comment>
<comment type="subcellular location">
    <subcellularLocation>
        <location evidence="1">Cytoplasm</location>
    </subcellularLocation>
</comment>
<comment type="domain">
    <text evidence="1">Domain I is involved in oligomerization and binding regulators, domain II is flexibile and of varying length in different bacteria, domain III forms the AAA+ region, while domain IV binds dsDNA.</text>
</comment>
<comment type="similarity">
    <text evidence="1">Belongs to the DnaA family.</text>
</comment>
<gene>
    <name evidence="1" type="primary">dnaA</name>
    <name type="ordered locus">NT01EI_0001</name>
</gene>
<keyword id="KW-0067">ATP-binding</keyword>
<keyword id="KW-0963">Cytoplasm</keyword>
<keyword id="KW-0235">DNA replication</keyword>
<keyword id="KW-0238">DNA-binding</keyword>
<keyword id="KW-0446">Lipid-binding</keyword>
<keyword id="KW-0547">Nucleotide-binding</keyword>
<protein>
    <recommendedName>
        <fullName evidence="1">Chromosomal replication initiator protein DnaA</fullName>
    </recommendedName>
</protein>
<evidence type="ECO:0000255" key="1">
    <source>
        <dbReference type="HAMAP-Rule" id="MF_00377"/>
    </source>
</evidence>
<dbReference type="EMBL" id="CP001600">
    <property type="protein sequence ID" value="ACR67263.1"/>
    <property type="molecule type" value="Genomic_DNA"/>
</dbReference>
<dbReference type="SMR" id="C5BHC5"/>
<dbReference type="STRING" id="67780.B6E78_11195"/>
<dbReference type="KEGG" id="eic:NT01EI_0001"/>
<dbReference type="HOGENOM" id="CLU_026910_0_1_6"/>
<dbReference type="OrthoDB" id="9807019at2"/>
<dbReference type="Proteomes" id="UP000001485">
    <property type="component" value="Chromosome"/>
</dbReference>
<dbReference type="GO" id="GO:0005737">
    <property type="term" value="C:cytoplasm"/>
    <property type="evidence" value="ECO:0007669"/>
    <property type="project" value="UniProtKB-SubCell"/>
</dbReference>
<dbReference type="GO" id="GO:0005886">
    <property type="term" value="C:plasma membrane"/>
    <property type="evidence" value="ECO:0007669"/>
    <property type="project" value="TreeGrafter"/>
</dbReference>
<dbReference type="GO" id="GO:0005524">
    <property type="term" value="F:ATP binding"/>
    <property type="evidence" value="ECO:0007669"/>
    <property type="project" value="UniProtKB-UniRule"/>
</dbReference>
<dbReference type="GO" id="GO:0016887">
    <property type="term" value="F:ATP hydrolysis activity"/>
    <property type="evidence" value="ECO:0007669"/>
    <property type="project" value="InterPro"/>
</dbReference>
<dbReference type="GO" id="GO:0003688">
    <property type="term" value="F:DNA replication origin binding"/>
    <property type="evidence" value="ECO:0007669"/>
    <property type="project" value="UniProtKB-UniRule"/>
</dbReference>
<dbReference type="GO" id="GO:0008289">
    <property type="term" value="F:lipid binding"/>
    <property type="evidence" value="ECO:0007669"/>
    <property type="project" value="UniProtKB-KW"/>
</dbReference>
<dbReference type="GO" id="GO:0006270">
    <property type="term" value="P:DNA replication initiation"/>
    <property type="evidence" value="ECO:0007669"/>
    <property type="project" value="UniProtKB-UniRule"/>
</dbReference>
<dbReference type="GO" id="GO:0006275">
    <property type="term" value="P:regulation of DNA replication"/>
    <property type="evidence" value="ECO:0007669"/>
    <property type="project" value="UniProtKB-UniRule"/>
</dbReference>
<dbReference type="CDD" id="cd00009">
    <property type="entry name" value="AAA"/>
    <property type="match status" value="1"/>
</dbReference>
<dbReference type="CDD" id="cd06571">
    <property type="entry name" value="Bac_DnaA_C"/>
    <property type="match status" value="1"/>
</dbReference>
<dbReference type="FunFam" id="1.10.1750.10:FF:000001">
    <property type="entry name" value="Chromosomal replication initiator protein DnaA"/>
    <property type="match status" value="1"/>
</dbReference>
<dbReference type="FunFam" id="1.10.8.60:FF:000003">
    <property type="entry name" value="Chromosomal replication initiator protein DnaA"/>
    <property type="match status" value="1"/>
</dbReference>
<dbReference type="FunFam" id="3.30.300.180:FF:000001">
    <property type="entry name" value="Chromosomal replication initiator protein DnaA"/>
    <property type="match status" value="1"/>
</dbReference>
<dbReference type="FunFam" id="3.40.50.300:FF:000103">
    <property type="entry name" value="Chromosomal replication initiator protein DnaA"/>
    <property type="match status" value="1"/>
</dbReference>
<dbReference type="Gene3D" id="1.10.1750.10">
    <property type="match status" value="1"/>
</dbReference>
<dbReference type="Gene3D" id="1.10.8.60">
    <property type="match status" value="1"/>
</dbReference>
<dbReference type="Gene3D" id="3.30.300.180">
    <property type="match status" value="1"/>
</dbReference>
<dbReference type="Gene3D" id="3.40.50.300">
    <property type="entry name" value="P-loop containing nucleotide triphosphate hydrolases"/>
    <property type="match status" value="1"/>
</dbReference>
<dbReference type="HAMAP" id="MF_00377">
    <property type="entry name" value="DnaA_bact"/>
    <property type="match status" value="1"/>
</dbReference>
<dbReference type="InterPro" id="IPR003593">
    <property type="entry name" value="AAA+_ATPase"/>
</dbReference>
<dbReference type="InterPro" id="IPR001957">
    <property type="entry name" value="Chromosome_initiator_DnaA"/>
</dbReference>
<dbReference type="InterPro" id="IPR020591">
    <property type="entry name" value="Chromosome_initiator_DnaA-like"/>
</dbReference>
<dbReference type="InterPro" id="IPR018312">
    <property type="entry name" value="Chromosome_initiator_DnaA_CS"/>
</dbReference>
<dbReference type="InterPro" id="IPR013159">
    <property type="entry name" value="DnaA_C"/>
</dbReference>
<dbReference type="InterPro" id="IPR013317">
    <property type="entry name" value="DnaA_dom"/>
</dbReference>
<dbReference type="InterPro" id="IPR024633">
    <property type="entry name" value="DnaA_N_dom"/>
</dbReference>
<dbReference type="InterPro" id="IPR038454">
    <property type="entry name" value="DnaA_N_sf"/>
</dbReference>
<dbReference type="InterPro" id="IPR027417">
    <property type="entry name" value="P-loop_NTPase"/>
</dbReference>
<dbReference type="InterPro" id="IPR010921">
    <property type="entry name" value="Trp_repressor/repl_initiator"/>
</dbReference>
<dbReference type="NCBIfam" id="TIGR00362">
    <property type="entry name" value="DnaA"/>
    <property type="match status" value="1"/>
</dbReference>
<dbReference type="PANTHER" id="PTHR30050">
    <property type="entry name" value="CHROMOSOMAL REPLICATION INITIATOR PROTEIN DNAA"/>
    <property type="match status" value="1"/>
</dbReference>
<dbReference type="PANTHER" id="PTHR30050:SF2">
    <property type="entry name" value="CHROMOSOMAL REPLICATION INITIATOR PROTEIN DNAA"/>
    <property type="match status" value="1"/>
</dbReference>
<dbReference type="Pfam" id="PF00308">
    <property type="entry name" value="Bac_DnaA"/>
    <property type="match status" value="1"/>
</dbReference>
<dbReference type="Pfam" id="PF08299">
    <property type="entry name" value="Bac_DnaA_C"/>
    <property type="match status" value="1"/>
</dbReference>
<dbReference type="Pfam" id="PF11638">
    <property type="entry name" value="DnaA_N"/>
    <property type="match status" value="1"/>
</dbReference>
<dbReference type="PRINTS" id="PR00051">
    <property type="entry name" value="DNAA"/>
</dbReference>
<dbReference type="SMART" id="SM00382">
    <property type="entry name" value="AAA"/>
    <property type="match status" value="1"/>
</dbReference>
<dbReference type="SMART" id="SM00760">
    <property type="entry name" value="Bac_DnaA_C"/>
    <property type="match status" value="1"/>
</dbReference>
<dbReference type="SUPFAM" id="SSF52540">
    <property type="entry name" value="P-loop containing nucleoside triphosphate hydrolases"/>
    <property type="match status" value="1"/>
</dbReference>
<dbReference type="SUPFAM" id="SSF48295">
    <property type="entry name" value="TrpR-like"/>
    <property type="match status" value="1"/>
</dbReference>
<dbReference type="PROSITE" id="PS01008">
    <property type="entry name" value="DNAA"/>
    <property type="match status" value="1"/>
</dbReference>
<proteinExistence type="inferred from homology"/>
<name>DNAA_EDWI9</name>